<organism>
    <name type="scientific">Aromatoleum aromaticum (strain DSM 19018 / LMG 30748 / EbN1)</name>
    <name type="common">Azoarcus sp. (strain EbN1)</name>
    <dbReference type="NCBI Taxonomy" id="76114"/>
    <lineage>
        <taxon>Bacteria</taxon>
        <taxon>Pseudomonadati</taxon>
        <taxon>Pseudomonadota</taxon>
        <taxon>Betaproteobacteria</taxon>
        <taxon>Rhodocyclales</taxon>
        <taxon>Rhodocyclaceae</taxon>
        <taxon>Aromatoleum</taxon>
    </lineage>
</organism>
<accession>Q5P797</accession>
<comment type="catalytic activity">
    <reaction evidence="1">
        <text>1-(5-phospho-beta-D-ribosyl)-ATP + H2O = 1-(5-phospho-beta-D-ribosyl)-5'-AMP + diphosphate + H(+)</text>
        <dbReference type="Rhea" id="RHEA:22828"/>
        <dbReference type="ChEBI" id="CHEBI:15377"/>
        <dbReference type="ChEBI" id="CHEBI:15378"/>
        <dbReference type="ChEBI" id="CHEBI:33019"/>
        <dbReference type="ChEBI" id="CHEBI:59457"/>
        <dbReference type="ChEBI" id="CHEBI:73183"/>
        <dbReference type="EC" id="3.6.1.31"/>
    </reaction>
</comment>
<comment type="pathway">
    <text evidence="1">Amino-acid biosynthesis; L-histidine biosynthesis; L-histidine from 5-phospho-alpha-D-ribose 1-diphosphate: step 2/9.</text>
</comment>
<comment type="subcellular location">
    <subcellularLocation>
        <location evidence="1">Cytoplasm</location>
    </subcellularLocation>
</comment>
<comment type="similarity">
    <text evidence="1">Belongs to the PRA-PH family.</text>
</comment>
<protein>
    <recommendedName>
        <fullName evidence="1">Phosphoribosyl-ATP pyrophosphatase</fullName>
        <shortName evidence="1">PRA-PH</shortName>
        <ecNumber evidence="1">3.6.1.31</ecNumber>
    </recommendedName>
</protein>
<keyword id="KW-0028">Amino-acid biosynthesis</keyword>
<keyword id="KW-0067">ATP-binding</keyword>
<keyword id="KW-0963">Cytoplasm</keyword>
<keyword id="KW-0368">Histidine biosynthesis</keyword>
<keyword id="KW-0378">Hydrolase</keyword>
<keyword id="KW-0547">Nucleotide-binding</keyword>
<keyword id="KW-1185">Reference proteome</keyword>
<evidence type="ECO:0000255" key="1">
    <source>
        <dbReference type="HAMAP-Rule" id="MF_01020"/>
    </source>
</evidence>
<dbReference type="EC" id="3.6.1.31" evidence="1"/>
<dbReference type="EMBL" id="CR555306">
    <property type="protein sequence ID" value="CAI06814.1"/>
    <property type="molecule type" value="Genomic_DNA"/>
</dbReference>
<dbReference type="RefSeq" id="WP_011236542.1">
    <property type="nucleotide sequence ID" value="NC_006513.1"/>
</dbReference>
<dbReference type="SMR" id="Q5P797"/>
<dbReference type="STRING" id="76114.ebA1290"/>
<dbReference type="KEGG" id="eba:ebA1290"/>
<dbReference type="eggNOG" id="COG0140">
    <property type="taxonomic scope" value="Bacteria"/>
</dbReference>
<dbReference type="HOGENOM" id="CLU_123337_1_2_4"/>
<dbReference type="OrthoDB" id="9814738at2"/>
<dbReference type="UniPathway" id="UPA00031">
    <property type="reaction ID" value="UER00007"/>
</dbReference>
<dbReference type="Proteomes" id="UP000006552">
    <property type="component" value="Chromosome"/>
</dbReference>
<dbReference type="GO" id="GO:0005737">
    <property type="term" value="C:cytoplasm"/>
    <property type="evidence" value="ECO:0007669"/>
    <property type="project" value="UniProtKB-SubCell"/>
</dbReference>
<dbReference type="GO" id="GO:0005524">
    <property type="term" value="F:ATP binding"/>
    <property type="evidence" value="ECO:0007669"/>
    <property type="project" value="UniProtKB-KW"/>
</dbReference>
<dbReference type="GO" id="GO:0004636">
    <property type="term" value="F:phosphoribosyl-ATP diphosphatase activity"/>
    <property type="evidence" value="ECO:0007669"/>
    <property type="project" value="UniProtKB-UniRule"/>
</dbReference>
<dbReference type="GO" id="GO:0000105">
    <property type="term" value="P:L-histidine biosynthetic process"/>
    <property type="evidence" value="ECO:0007669"/>
    <property type="project" value="UniProtKB-UniRule"/>
</dbReference>
<dbReference type="CDD" id="cd11534">
    <property type="entry name" value="NTP-PPase_HisIE_like"/>
    <property type="match status" value="1"/>
</dbReference>
<dbReference type="Gene3D" id="1.10.287.1080">
    <property type="entry name" value="MazG-like"/>
    <property type="match status" value="1"/>
</dbReference>
<dbReference type="HAMAP" id="MF_01020">
    <property type="entry name" value="HisE"/>
    <property type="match status" value="1"/>
</dbReference>
<dbReference type="InterPro" id="IPR008179">
    <property type="entry name" value="HisE"/>
</dbReference>
<dbReference type="InterPro" id="IPR021130">
    <property type="entry name" value="PRib-ATP_PPHydrolase-like"/>
</dbReference>
<dbReference type="NCBIfam" id="TIGR03188">
    <property type="entry name" value="histidine_hisI"/>
    <property type="match status" value="1"/>
</dbReference>
<dbReference type="NCBIfam" id="NF001611">
    <property type="entry name" value="PRK00400.1-3"/>
    <property type="match status" value="1"/>
</dbReference>
<dbReference type="PANTHER" id="PTHR42945">
    <property type="entry name" value="HISTIDINE BIOSYNTHESIS BIFUNCTIONAL PROTEIN"/>
    <property type="match status" value="1"/>
</dbReference>
<dbReference type="PANTHER" id="PTHR42945:SF9">
    <property type="entry name" value="HISTIDINE BIOSYNTHESIS BIFUNCTIONAL PROTEIN HISIE"/>
    <property type="match status" value="1"/>
</dbReference>
<dbReference type="Pfam" id="PF01503">
    <property type="entry name" value="PRA-PH"/>
    <property type="match status" value="1"/>
</dbReference>
<dbReference type="SUPFAM" id="SSF101386">
    <property type="entry name" value="all-alpha NTP pyrophosphatases"/>
    <property type="match status" value="1"/>
</dbReference>
<gene>
    <name evidence="1" type="primary">hisE</name>
    <name type="ordered locus">AZOSEA06910</name>
    <name type="ORF">ebA1290</name>
</gene>
<proteinExistence type="inferred from homology"/>
<feature type="chain" id="PRO_0000230165" description="Phosphoribosyl-ATP pyrophosphatase">
    <location>
        <begin position="1"/>
        <end position="108"/>
    </location>
</feature>
<name>HIS2_AROAE</name>
<sequence>MIDIEVLHRVAATLAERKKADPDSSYVSSLYAKGTDAICKKVAEEAAETIMAAKDKDMLHVVWEVTDLWFHSLVLLTHFGLSVDDVLAEFRRREGVSGIDEKKSRTVS</sequence>
<reference key="1">
    <citation type="journal article" date="2005" name="Arch. Microbiol.">
        <title>The genome sequence of an anaerobic aromatic-degrading denitrifying bacterium, strain EbN1.</title>
        <authorList>
            <person name="Rabus R."/>
            <person name="Kube M."/>
            <person name="Heider J."/>
            <person name="Beck A."/>
            <person name="Heitmann K."/>
            <person name="Widdel F."/>
            <person name="Reinhardt R."/>
        </authorList>
    </citation>
    <scope>NUCLEOTIDE SEQUENCE [LARGE SCALE GENOMIC DNA]</scope>
    <source>
        <strain>DSM 19018 / LMG 30748 / EbN1</strain>
    </source>
</reference>